<proteinExistence type="inferred from homology"/>
<evidence type="ECO:0000250" key="1"/>
<evidence type="ECO:0000255" key="2">
    <source>
        <dbReference type="HAMAP-Rule" id="MF_00610"/>
    </source>
</evidence>
<keyword id="KW-0150">Chloroplast</keyword>
<keyword id="KW-0249">Electron transport</keyword>
<keyword id="KW-0349">Heme</keyword>
<keyword id="KW-0408">Iron</keyword>
<keyword id="KW-0472">Membrane</keyword>
<keyword id="KW-0479">Metal-binding</keyword>
<keyword id="KW-0602">Photosynthesis</keyword>
<keyword id="KW-0934">Plastid</keyword>
<keyword id="KW-0732">Signal</keyword>
<keyword id="KW-0793">Thylakoid</keyword>
<keyword id="KW-0812">Transmembrane</keyword>
<keyword id="KW-1133">Transmembrane helix</keyword>
<keyword id="KW-0813">Transport</keyword>
<sequence length="320" mass="35351">MQTRNAFSYIKEEITRSISVLLVIYIIIRAPISNAYPIFAQQGYENPREATGRIVCANCHLANKPVDIEVPQTVLPDTVFEAVVRIPYDMQVKQVLANGKRGALNVGAVLILPEGFELAPTDRISPEIKEKMGNLSFQSYRPTKKNILVVGPVPGQKYSEITFPILSPDPATNRDVNFLKYPIYVGGNRGRGQIYPDGSKSNNNVYNATTSGIINKIIRKDKGGYEITIVDASDGREVIDIIPPGPELLVSEGESIKLDQPLTSNPNVGGFGQGDAEIVLQDPLRVQGLLFFLASIIFAQIFLVLKKKQFEKVQLSEMNF</sequence>
<geneLocation type="chloroplast"/>
<organism>
    <name type="scientific">Lotus japonicus</name>
    <name type="common">Lotus corniculatus var. japonicus</name>
    <dbReference type="NCBI Taxonomy" id="34305"/>
    <lineage>
        <taxon>Eukaryota</taxon>
        <taxon>Viridiplantae</taxon>
        <taxon>Streptophyta</taxon>
        <taxon>Embryophyta</taxon>
        <taxon>Tracheophyta</taxon>
        <taxon>Spermatophyta</taxon>
        <taxon>Magnoliopsida</taxon>
        <taxon>eudicotyledons</taxon>
        <taxon>Gunneridae</taxon>
        <taxon>Pentapetalae</taxon>
        <taxon>rosids</taxon>
        <taxon>fabids</taxon>
        <taxon>Fabales</taxon>
        <taxon>Fabaceae</taxon>
        <taxon>Papilionoideae</taxon>
        <taxon>50 kb inversion clade</taxon>
        <taxon>NPAAA clade</taxon>
        <taxon>Hologalegina</taxon>
        <taxon>robinioid clade</taxon>
        <taxon>Loteae</taxon>
        <taxon>Lotus</taxon>
    </lineage>
</organism>
<reference key="1">
    <citation type="journal article" date="2000" name="DNA Res.">
        <title>Complete structure of the chloroplast genome of a legume, Lotus japonicus.</title>
        <authorList>
            <person name="Kato T."/>
            <person name="Kaneko T."/>
            <person name="Sato S."/>
            <person name="Nakamura Y."/>
            <person name="Tabata S."/>
        </authorList>
    </citation>
    <scope>NUCLEOTIDE SEQUENCE [LARGE SCALE GENOMIC DNA]</scope>
    <source>
        <strain>cv. Miyakojima MG-20</strain>
    </source>
</reference>
<name>CYF_LOTJA</name>
<accession>Q9BBR8</accession>
<protein>
    <recommendedName>
        <fullName evidence="2">Cytochrome f</fullName>
    </recommendedName>
</protein>
<feature type="signal peptide" evidence="2">
    <location>
        <begin position="1"/>
        <end position="35"/>
    </location>
</feature>
<feature type="chain" id="PRO_0000023817" description="Cytochrome f">
    <location>
        <begin position="36"/>
        <end position="320"/>
    </location>
</feature>
<feature type="transmembrane region" description="Helical" evidence="2">
    <location>
        <begin position="286"/>
        <end position="305"/>
    </location>
</feature>
<feature type="binding site" description="axial binding residue" evidence="2">
    <location>
        <position position="36"/>
    </location>
    <ligand>
        <name>heme</name>
        <dbReference type="ChEBI" id="CHEBI:30413"/>
    </ligand>
    <ligandPart>
        <name>Fe</name>
        <dbReference type="ChEBI" id="CHEBI:18248"/>
    </ligandPart>
</feature>
<feature type="binding site" description="covalent" evidence="2">
    <location>
        <position position="56"/>
    </location>
    <ligand>
        <name>heme</name>
        <dbReference type="ChEBI" id="CHEBI:30413"/>
    </ligand>
</feature>
<feature type="binding site" description="covalent" evidence="2">
    <location>
        <position position="59"/>
    </location>
    <ligand>
        <name>heme</name>
        <dbReference type="ChEBI" id="CHEBI:30413"/>
    </ligand>
</feature>
<feature type="binding site" description="axial binding residue" evidence="2">
    <location>
        <position position="60"/>
    </location>
    <ligand>
        <name>heme</name>
        <dbReference type="ChEBI" id="CHEBI:30413"/>
    </ligand>
    <ligandPart>
        <name>Fe</name>
        <dbReference type="ChEBI" id="CHEBI:18248"/>
    </ligandPart>
</feature>
<gene>
    <name evidence="2" type="primary">petA</name>
</gene>
<dbReference type="EMBL" id="AP002983">
    <property type="protein sequence ID" value="BAB33209.1"/>
    <property type="molecule type" value="Genomic_DNA"/>
</dbReference>
<dbReference type="RefSeq" id="NP_084811.1">
    <property type="nucleotide sequence ID" value="NC_002694.1"/>
</dbReference>
<dbReference type="SMR" id="Q9BBR8"/>
<dbReference type="ProMEX" id="Q9BBR8"/>
<dbReference type="GeneID" id="802881"/>
<dbReference type="GO" id="GO:0009535">
    <property type="term" value="C:chloroplast thylakoid membrane"/>
    <property type="evidence" value="ECO:0007669"/>
    <property type="project" value="UniProtKB-SubCell"/>
</dbReference>
<dbReference type="GO" id="GO:0009055">
    <property type="term" value="F:electron transfer activity"/>
    <property type="evidence" value="ECO:0007669"/>
    <property type="project" value="UniProtKB-UniRule"/>
</dbReference>
<dbReference type="GO" id="GO:0020037">
    <property type="term" value="F:heme binding"/>
    <property type="evidence" value="ECO:0007669"/>
    <property type="project" value="InterPro"/>
</dbReference>
<dbReference type="GO" id="GO:0005506">
    <property type="term" value="F:iron ion binding"/>
    <property type="evidence" value="ECO:0007669"/>
    <property type="project" value="InterPro"/>
</dbReference>
<dbReference type="GO" id="GO:0015979">
    <property type="term" value="P:photosynthesis"/>
    <property type="evidence" value="ECO:0007669"/>
    <property type="project" value="UniProtKB-UniRule"/>
</dbReference>
<dbReference type="FunFam" id="1.20.5.700:FF:000001">
    <property type="entry name" value="Cytochrome f"/>
    <property type="match status" value="1"/>
</dbReference>
<dbReference type="FunFam" id="2.40.50.100:FF:000007">
    <property type="entry name" value="Cytochrome f"/>
    <property type="match status" value="1"/>
</dbReference>
<dbReference type="FunFam" id="2.60.40.830:FF:000001">
    <property type="entry name" value="Cytochrome f"/>
    <property type="match status" value="1"/>
</dbReference>
<dbReference type="Gene3D" id="2.40.50.100">
    <property type="match status" value="1"/>
</dbReference>
<dbReference type="Gene3D" id="2.60.40.830">
    <property type="entry name" value="Cytochrome f large domain"/>
    <property type="match status" value="1"/>
</dbReference>
<dbReference type="Gene3D" id="1.20.5.700">
    <property type="entry name" value="Single helix bin"/>
    <property type="match status" value="1"/>
</dbReference>
<dbReference type="HAMAP" id="MF_00610">
    <property type="entry name" value="Cytb6_f_cytF"/>
    <property type="match status" value="1"/>
</dbReference>
<dbReference type="InterPro" id="IPR024058">
    <property type="entry name" value="Cyt-f_TM"/>
</dbReference>
<dbReference type="InterPro" id="IPR002325">
    <property type="entry name" value="Cyt_f"/>
</dbReference>
<dbReference type="InterPro" id="IPR024094">
    <property type="entry name" value="Cyt_f_lg_dom"/>
</dbReference>
<dbReference type="InterPro" id="IPR036826">
    <property type="entry name" value="Cyt_f_lg_dom_sf"/>
</dbReference>
<dbReference type="InterPro" id="IPR011054">
    <property type="entry name" value="Rudment_hybrid_motif"/>
</dbReference>
<dbReference type="PANTHER" id="PTHR33288">
    <property type="match status" value="1"/>
</dbReference>
<dbReference type="PANTHER" id="PTHR33288:SF10">
    <property type="entry name" value="CYTOCHROME F"/>
    <property type="match status" value="1"/>
</dbReference>
<dbReference type="Pfam" id="PF01333">
    <property type="entry name" value="Apocytochr_F_C"/>
    <property type="match status" value="1"/>
</dbReference>
<dbReference type="Pfam" id="PF16639">
    <property type="entry name" value="Apocytochr_F_N"/>
    <property type="match status" value="1"/>
</dbReference>
<dbReference type="PRINTS" id="PR00610">
    <property type="entry name" value="CYTOCHROMEF"/>
</dbReference>
<dbReference type="SUPFAM" id="SSF103431">
    <property type="entry name" value="Cytochrome f subunit of the cytochrome b6f complex, transmembrane anchor"/>
    <property type="match status" value="1"/>
</dbReference>
<dbReference type="SUPFAM" id="SSF49441">
    <property type="entry name" value="Cytochrome f, large domain"/>
    <property type="match status" value="1"/>
</dbReference>
<dbReference type="SUPFAM" id="SSF51246">
    <property type="entry name" value="Rudiment single hybrid motif"/>
    <property type="match status" value="1"/>
</dbReference>
<dbReference type="PROSITE" id="PS51010">
    <property type="entry name" value="CYTF"/>
    <property type="match status" value="1"/>
</dbReference>
<comment type="function">
    <text evidence="2">Component of the cytochrome b6-f complex, which mediates electron transfer between photosystem II (PSII) and photosystem I (PSI), cyclic electron flow around PSI, and state transitions.</text>
</comment>
<comment type="cofactor">
    <cofactor evidence="2">
        <name>heme</name>
        <dbReference type="ChEBI" id="CHEBI:30413"/>
    </cofactor>
    <text evidence="2">Binds 1 heme group covalently.</text>
</comment>
<comment type="subunit">
    <text evidence="1">The 4 large subunits of the cytochrome b6-f complex are cytochrome b6, subunit IV (17 kDa polypeptide, petD), cytochrome f and the Rieske protein, while the 4 small subunits are PetG, PetL, PetM and PetN. The complex functions as a dimer (By similarity).</text>
</comment>
<comment type="subcellular location">
    <subcellularLocation>
        <location evidence="2">Plastid</location>
        <location evidence="2">Chloroplast thylakoid membrane</location>
        <topology evidence="2">Single-pass membrane protein</topology>
    </subcellularLocation>
</comment>
<comment type="similarity">
    <text evidence="2">Belongs to the cytochrome f family.</text>
</comment>